<reference key="1">
    <citation type="journal article" date="1996" name="Plant J.">
        <title>Molecular cloning and characterization of the CER2 gene of Arabidopsis thaliana.</title>
        <authorList>
            <person name="Negruk V."/>
            <person name="Yang P."/>
            <person name="Subramanian M."/>
            <person name="McNevin J.P."/>
            <person name="Lemieux B."/>
        </authorList>
    </citation>
    <scope>NUCLEOTIDE SEQUENCE [GENOMIC DNA]</scope>
    <scope>TISSUE SPECIFICITY</scope>
    <scope>DISRUPTION PHENOTYPE</scope>
    <source>
        <strain>cv. Wassilewskija</strain>
    </source>
</reference>
<reference key="2">
    <citation type="journal article" date="1997" name="Plant Physiol.">
        <title>Developmental and hormonal regulation of the arabidopsis CER2 gene that codes for a nuclear-localized protein required for the normal accumulation of cuticular waxes.</title>
        <authorList>
            <person name="Xia Y."/>
            <person name="Nikolau B.J."/>
            <person name="Schnable P.S."/>
        </authorList>
    </citation>
    <scope>NUCLEOTIDE SEQUENCE [GENOMIC DNA]</scope>
    <scope>SUBCELLULAR LOCATION</scope>
    <scope>DISRUPTION PHENOTYPE</scope>
    <source>
        <strain>cv. Landsberg erecta</strain>
    </source>
</reference>
<reference key="3">
    <citation type="journal article" date="1999" name="Nature">
        <title>Sequence and analysis of chromosome 4 of the plant Arabidopsis thaliana.</title>
        <authorList>
            <person name="Mayer K.F.X."/>
            <person name="Schueller C."/>
            <person name="Wambutt R."/>
            <person name="Murphy G."/>
            <person name="Volckaert G."/>
            <person name="Pohl T."/>
            <person name="Duesterhoeft A."/>
            <person name="Stiekema W."/>
            <person name="Entian K.-D."/>
            <person name="Terryn N."/>
            <person name="Harris B."/>
            <person name="Ansorge W."/>
            <person name="Brandt P."/>
            <person name="Grivell L.A."/>
            <person name="Rieger M."/>
            <person name="Weichselgartner M."/>
            <person name="de Simone V."/>
            <person name="Obermaier B."/>
            <person name="Mache R."/>
            <person name="Mueller M."/>
            <person name="Kreis M."/>
            <person name="Delseny M."/>
            <person name="Puigdomenech P."/>
            <person name="Watson M."/>
            <person name="Schmidtheini T."/>
            <person name="Reichert B."/>
            <person name="Portetelle D."/>
            <person name="Perez-Alonso M."/>
            <person name="Boutry M."/>
            <person name="Bancroft I."/>
            <person name="Vos P."/>
            <person name="Hoheisel J."/>
            <person name="Zimmermann W."/>
            <person name="Wedler H."/>
            <person name="Ridley P."/>
            <person name="Langham S.-A."/>
            <person name="McCullagh B."/>
            <person name="Bilham L."/>
            <person name="Robben J."/>
            <person name="van der Schueren J."/>
            <person name="Grymonprez B."/>
            <person name="Chuang Y.-J."/>
            <person name="Vandenbussche F."/>
            <person name="Braeken M."/>
            <person name="Weltjens I."/>
            <person name="Voet M."/>
            <person name="Bastiaens I."/>
            <person name="Aert R."/>
            <person name="Defoor E."/>
            <person name="Weitzenegger T."/>
            <person name="Bothe G."/>
            <person name="Ramsperger U."/>
            <person name="Hilbert H."/>
            <person name="Braun M."/>
            <person name="Holzer E."/>
            <person name="Brandt A."/>
            <person name="Peters S."/>
            <person name="van Staveren M."/>
            <person name="Dirkse W."/>
            <person name="Mooijman P."/>
            <person name="Klein Lankhorst R."/>
            <person name="Rose M."/>
            <person name="Hauf J."/>
            <person name="Koetter P."/>
            <person name="Berneiser S."/>
            <person name="Hempel S."/>
            <person name="Feldpausch M."/>
            <person name="Lamberth S."/>
            <person name="Van den Daele H."/>
            <person name="De Keyser A."/>
            <person name="Buysshaert C."/>
            <person name="Gielen J."/>
            <person name="Villarroel R."/>
            <person name="De Clercq R."/>
            <person name="van Montagu M."/>
            <person name="Rogers J."/>
            <person name="Cronin A."/>
            <person name="Quail M.A."/>
            <person name="Bray-Allen S."/>
            <person name="Clark L."/>
            <person name="Doggett J."/>
            <person name="Hall S."/>
            <person name="Kay M."/>
            <person name="Lennard N."/>
            <person name="McLay K."/>
            <person name="Mayes R."/>
            <person name="Pettett A."/>
            <person name="Rajandream M.A."/>
            <person name="Lyne M."/>
            <person name="Benes V."/>
            <person name="Rechmann S."/>
            <person name="Borkova D."/>
            <person name="Bloecker H."/>
            <person name="Scharfe M."/>
            <person name="Grimm M."/>
            <person name="Loehnert T.-H."/>
            <person name="Dose S."/>
            <person name="de Haan M."/>
            <person name="Maarse A.C."/>
            <person name="Schaefer M."/>
            <person name="Mueller-Auer S."/>
            <person name="Gabel C."/>
            <person name="Fuchs M."/>
            <person name="Fartmann B."/>
            <person name="Granderath K."/>
            <person name="Dauner D."/>
            <person name="Herzl A."/>
            <person name="Neumann S."/>
            <person name="Argiriou A."/>
            <person name="Vitale D."/>
            <person name="Liguori R."/>
            <person name="Piravandi E."/>
            <person name="Massenet O."/>
            <person name="Quigley F."/>
            <person name="Clabauld G."/>
            <person name="Muendlein A."/>
            <person name="Felber R."/>
            <person name="Schnabl S."/>
            <person name="Hiller R."/>
            <person name="Schmidt W."/>
            <person name="Lecharny A."/>
            <person name="Aubourg S."/>
            <person name="Chefdor F."/>
            <person name="Cooke R."/>
            <person name="Berger C."/>
            <person name="Monfort A."/>
            <person name="Casacuberta E."/>
            <person name="Gibbons T."/>
            <person name="Weber N."/>
            <person name="Vandenbol M."/>
            <person name="Bargues M."/>
            <person name="Terol J."/>
            <person name="Torres A."/>
            <person name="Perez-Perez A."/>
            <person name="Purnelle B."/>
            <person name="Bent E."/>
            <person name="Johnson S."/>
            <person name="Tacon D."/>
            <person name="Jesse T."/>
            <person name="Heijnen L."/>
            <person name="Schwarz S."/>
            <person name="Scholler P."/>
            <person name="Heber S."/>
            <person name="Francs P."/>
            <person name="Bielke C."/>
            <person name="Frishman D."/>
            <person name="Haase D."/>
            <person name="Lemcke K."/>
            <person name="Mewes H.-W."/>
            <person name="Stocker S."/>
            <person name="Zaccaria P."/>
            <person name="Bevan M."/>
            <person name="Wilson R.K."/>
            <person name="de la Bastide M."/>
            <person name="Habermann K."/>
            <person name="Parnell L."/>
            <person name="Dedhia N."/>
            <person name="Gnoj L."/>
            <person name="Schutz K."/>
            <person name="Huang E."/>
            <person name="Spiegel L."/>
            <person name="Sekhon M."/>
            <person name="Murray J."/>
            <person name="Sheet P."/>
            <person name="Cordes M."/>
            <person name="Abu-Threideh J."/>
            <person name="Stoneking T."/>
            <person name="Kalicki J."/>
            <person name="Graves T."/>
            <person name="Harmon G."/>
            <person name="Edwards J."/>
            <person name="Latreille P."/>
            <person name="Courtney L."/>
            <person name="Cloud J."/>
            <person name="Abbott A."/>
            <person name="Scott K."/>
            <person name="Johnson D."/>
            <person name="Minx P."/>
            <person name="Bentley D."/>
            <person name="Fulton B."/>
            <person name="Miller N."/>
            <person name="Greco T."/>
            <person name="Kemp K."/>
            <person name="Kramer J."/>
            <person name="Fulton L."/>
            <person name="Mardis E."/>
            <person name="Dante M."/>
            <person name="Pepin K."/>
            <person name="Hillier L.W."/>
            <person name="Nelson J."/>
            <person name="Spieth J."/>
            <person name="Ryan E."/>
            <person name="Andrews S."/>
            <person name="Geisel C."/>
            <person name="Layman D."/>
            <person name="Du H."/>
            <person name="Ali J."/>
            <person name="Berghoff A."/>
            <person name="Jones K."/>
            <person name="Drone K."/>
            <person name="Cotton M."/>
            <person name="Joshu C."/>
            <person name="Antonoiu B."/>
            <person name="Zidanic M."/>
            <person name="Strong C."/>
            <person name="Sun H."/>
            <person name="Lamar B."/>
            <person name="Yordan C."/>
            <person name="Ma P."/>
            <person name="Zhong J."/>
            <person name="Preston R."/>
            <person name="Vil D."/>
            <person name="Shekher M."/>
            <person name="Matero A."/>
            <person name="Shah R."/>
            <person name="Swaby I.K."/>
            <person name="O'Shaughnessy A."/>
            <person name="Rodriguez M."/>
            <person name="Hoffman J."/>
            <person name="Till S."/>
            <person name="Granat S."/>
            <person name="Shohdy N."/>
            <person name="Hasegawa A."/>
            <person name="Hameed A."/>
            <person name="Lodhi M."/>
            <person name="Johnson A."/>
            <person name="Chen E."/>
            <person name="Marra M.A."/>
            <person name="Martienssen R."/>
            <person name="McCombie W.R."/>
        </authorList>
    </citation>
    <scope>NUCLEOTIDE SEQUENCE [LARGE SCALE GENOMIC DNA]</scope>
    <source>
        <strain>cv. Columbia</strain>
    </source>
</reference>
<reference key="4">
    <citation type="journal article" date="2017" name="Plant J.">
        <title>Araport11: a complete reannotation of the Arabidopsis thaliana reference genome.</title>
        <authorList>
            <person name="Cheng C.Y."/>
            <person name="Krishnakumar V."/>
            <person name="Chan A.P."/>
            <person name="Thibaud-Nissen F."/>
            <person name="Schobel S."/>
            <person name="Town C.D."/>
        </authorList>
    </citation>
    <scope>GENOME REANNOTATION</scope>
    <source>
        <strain>cv. Columbia</strain>
    </source>
</reference>
<reference key="5">
    <citation type="submission" date="2002-03" db="EMBL/GenBank/DDBJ databases">
        <title>Full-length cDNA from Arabidopsis thaliana.</title>
        <authorList>
            <person name="Brover V.V."/>
            <person name="Troukhan M.E."/>
            <person name="Alexandrov N.A."/>
            <person name="Lu Y.-P."/>
            <person name="Flavell R.B."/>
            <person name="Feldmann K.A."/>
        </authorList>
    </citation>
    <scope>NUCLEOTIDE SEQUENCE [LARGE SCALE MRNA]</scope>
</reference>
<reference key="6">
    <citation type="journal article" date="2007" name="Plant J.">
        <title>Composition of alkyl esters in the cuticular wax on inflorescence stems of Arabidopsis thaliana cer mutants.</title>
        <authorList>
            <person name="Lai C."/>
            <person name="Kunst L."/>
            <person name="Jetter R."/>
        </authorList>
    </citation>
    <scope>FUNCTION</scope>
    <scope>DISRUPTION PHENOTYPE</scope>
</reference>
<reference key="7">
    <citation type="journal article" date="2012" name="Mol. Cell. Proteomics">
        <title>Comparative large-scale characterisation of plant vs. mammal proteins reveals similar and idiosyncratic N-alpha acetylation features.</title>
        <authorList>
            <person name="Bienvenut W.V."/>
            <person name="Sumpton D."/>
            <person name="Martinez A."/>
            <person name="Lilla S."/>
            <person name="Espagne C."/>
            <person name="Meinnel T."/>
            <person name="Giglione C."/>
        </authorList>
    </citation>
    <scope>ACETYLATION [LARGE SCALE ANALYSIS] AT MET-1</scope>
    <scope>IDENTIFICATION BY MASS SPECTROMETRY [LARGE SCALE ANALYSIS]</scope>
</reference>
<reference key="8">
    <citation type="journal article" date="2012" name="Plant Physiol.">
        <title>Arabidopsis ECERIFERUM2 is a component of the fatty acid elongation machinery required for fatty acid extension to exceptional lengths.</title>
        <authorList>
            <person name="Haslam T.M."/>
            <person name="Manas-Fernandez A."/>
            <person name="Zhao L."/>
            <person name="Kunst L."/>
        </authorList>
    </citation>
    <scope>FUNCTION</scope>
    <scope>SUBCELLULAR LOCATION</scope>
</reference>
<reference key="9">
    <citation type="journal article" date="2013" name="Plant J.">
        <title>The Arabidopsis cer26 mutant, like the cer2 mutant, is specifically affected in the very long chain fatty acid elongation process.</title>
        <authorList>
            <person name="Pascal S."/>
            <person name="Bernard A."/>
            <person name="Sorel M."/>
            <person name="Pervent M."/>
            <person name="Vile D."/>
            <person name="Haslam R.P."/>
            <person name="Napier J.A."/>
            <person name="Lessire R."/>
            <person name="Domergue F."/>
            <person name="Joubes J."/>
        </authorList>
    </citation>
    <scope>FUNCTION</scope>
    <scope>TISSUE SPECIFICITY</scope>
</reference>
<gene>
    <name type="primary">CER2</name>
    <name type="ordered locus">At4g24510</name>
    <name type="ORF">F22K18.290</name>
</gene>
<protein>
    <recommendedName>
        <fullName>Protein ECERIFERUM 2</fullName>
    </recommendedName>
</protein>
<accession>Q39048</accession>
<sequence>MEGSPVTSVRLSSVVPASVVGENKPRQLTPMDLAMKLHYVRAVYFFKGARDFTVADVKNTMFTLQSLLQSYHHVSGRIRMSDNDNDTSAAAIPYIRCNDSGIRVVEANVEEFTVEKWLELDDRSIDHRFLVYDHVLGPDLTFSPLVFLQITQFKCGGLCIGLSWAHILGDVFSASTFMKTLGQLVSGHAPTKPVYPKTPELTSHARNDGEAISIEKIDSVGEYWLLTNKCKMGRHIFNFSLNHIDSLMAKYTTRDQPFSEVDILYALIWKSLLNIRGETNTNVITICDRKKSSTCWNEDLVISVVEKNDEMVGISELAALIAGEKREENGAIKRMIEQDKGSSDFFTYGANLTFVNLDEIDMYELEINGGKPDFVNYTIHGVGDKGVVLVFPKQNFARIVSVVMPEEDLAKLKEEVTNMII</sequence>
<keyword id="KW-0007">Acetylation</keyword>
<keyword id="KW-0961">Cell wall biogenesis/degradation</keyword>
<keyword id="KW-0256">Endoplasmic reticulum</keyword>
<keyword id="KW-0539">Nucleus</keyword>
<keyword id="KW-1185">Reference proteome</keyword>
<proteinExistence type="evidence at protein level"/>
<name>CER2_ARATH</name>
<organism>
    <name type="scientific">Arabidopsis thaliana</name>
    <name type="common">Mouse-ear cress</name>
    <dbReference type="NCBI Taxonomy" id="3702"/>
    <lineage>
        <taxon>Eukaryota</taxon>
        <taxon>Viridiplantae</taxon>
        <taxon>Streptophyta</taxon>
        <taxon>Embryophyta</taxon>
        <taxon>Tracheophyta</taxon>
        <taxon>Spermatophyta</taxon>
        <taxon>Magnoliopsida</taxon>
        <taxon>eudicotyledons</taxon>
        <taxon>Gunneridae</taxon>
        <taxon>Pentapetalae</taxon>
        <taxon>rosids</taxon>
        <taxon>malvids</taxon>
        <taxon>Brassicales</taxon>
        <taxon>Brassicaceae</taxon>
        <taxon>Camelineae</taxon>
        <taxon>Arabidopsis</taxon>
    </lineage>
</organism>
<evidence type="ECO:0000269" key="1">
    <source>
    </source>
</evidence>
<evidence type="ECO:0000269" key="2">
    <source>
    </source>
</evidence>
<evidence type="ECO:0000269" key="3">
    <source>
    </source>
</evidence>
<evidence type="ECO:0000269" key="4">
    <source>
    </source>
</evidence>
<evidence type="ECO:0000269" key="5">
    <source>
    </source>
</evidence>
<evidence type="ECO:0000305" key="6"/>
<evidence type="ECO:0007744" key="7">
    <source>
    </source>
</evidence>
<feature type="chain" id="PRO_0000424432" description="Protein ECERIFERUM 2">
    <location>
        <begin position="1"/>
        <end position="421"/>
    </location>
</feature>
<feature type="modified residue" description="N-acetylmethionine" evidence="7">
    <location>
        <position position="1"/>
    </location>
</feature>
<comment type="function">
    <text evidence="1 2 3">Involved in biosynthesis of the epicuticular wax. Plays a role in very-long-chain fatty acid (VLCFA) biosynthesis and is required for C28 fatty acid elongation in stem. Despite its classification as a BAHD acyltransferase based on sequence homology, CER2 does not seem to share the catalytic mechanism of the members of the BAHD family.</text>
</comment>
<comment type="subcellular location">
    <subcellularLocation>
        <location>Endoplasmic reticulum</location>
    </subcellularLocation>
    <subcellularLocation>
        <location evidence="6">Nucleus</location>
    </subcellularLocation>
</comment>
<comment type="tissue specificity">
    <text evidence="3 4">Expressed at high levels in the epidermis of stems and young siliques. Expressed in flowers.</text>
</comment>
<comment type="disruption phenotype">
    <text evidence="1 4 5">Bright green and glossy stems and siliques due to low abundance of cuticular wax. Increased levels of C26 and C28 alcohols and disappearance of C29 alkane and C30 alcohol in the stem wax.</text>
</comment>
<comment type="similarity">
    <text evidence="6">Belongs to the plant acyltransferase family.</text>
</comment>
<dbReference type="EMBL" id="X93080">
    <property type="protein sequence ID" value="CAA63618.1"/>
    <property type="molecule type" value="Genomic_DNA"/>
</dbReference>
<dbReference type="EMBL" id="U40849">
    <property type="protein sequence ID" value="AAB17946.1"/>
    <property type="molecule type" value="Genomic_DNA"/>
</dbReference>
<dbReference type="EMBL" id="BT026481">
    <property type="protein sequence ID" value="ABH04588.1"/>
    <property type="molecule type" value="mRNA"/>
</dbReference>
<dbReference type="EMBL" id="AL035356">
    <property type="protein sequence ID" value="CAA23012.1"/>
    <property type="molecule type" value="Genomic_DNA"/>
</dbReference>
<dbReference type="EMBL" id="AL161561">
    <property type="protein sequence ID" value="CAB79361.1"/>
    <property type="molecule type" value="Genomic_DNA"/>
</dbReference>
<dbReference type="EMBL" id="CP002687">
    <property type="protein sequence ID" value="AEE84918.1"/>
    <property type="molecule type" value="Genomic_DNA"/>
</dbReference>
<dbReference type="EMBL" id="AY087262">
    <property type="protein sequence ID" value="AAM64817.1"/>
    <property type="molecule type" value="mRNA"/>
</dbReference>
<dbReference type="PIR" id="T05583">
    <property type="entry name" value="T05583"/>
</dbReference>
<dbReference type="RefSeq" id="NP_194182.1">
    <property type="nucleotide sequence ID" value="NM_118584.3"/>
</dbReference>
<dbReference type="SMR" id="Q39048"/>
<dbReference type="BioGRID" id="13842">
    <property type="interactions" value="10"/>
</dbReference>
<dbReference type="FunCoup" id="Q39048">
    <property type="interactions" value="101"/>
</dbReference>
<dbReference type="STRING" id="3702.Q39048"/>
<dbReference type="iPTMnet" id="Q39048"/>
<dbReference type="PaxDb" id="3702-AT4G24510.1"/>
<dbReference type="ProteomicsDB" id="220610"/>
<dbReference type="EnsemblPlants" id="AT4G24510.1">
    <property type="protein sequence ID" value="AT4G24510.1"/>
    <property type="gene ID" value="AT4G24510"/>
</dbReference>
<dbReference type="GeneID" id="828553"/>
<dbReference type="Gramene" id="AT4G24510.1">
    <property type="protein sequence ID" value="AT4G24510.1"/>
    <property type="gene ID" value="AT4G24510"/>
</dbReference>
<dbReference type="KEGG" id="ath:AT4G24510"/>
<dbReference type="Araport" id="AT4G24510"/>
<dbReference type="TAIR" id="AT4G24510">
    <property type="gene designation" value="CER2"/>
</dbReference>
<dbReference type="eggNOG" id="ENOG502QQYP">
    <property type="taxonomic scope" value="Eukaryota"/>
</dbReference>
<dbReference type="HOGENOM" id="CLU_049517_0_0_1"/>
<dbReference type="InParanoid" id="Q39048"/>
<dbReference type="OMA" id="VFLQFTW"/>
<dbReference type="PhylomeDB" id="Q39048"/>
<dbReference type="PRO" id="PR:Q39048"/>
<dbReference type="Proteomes" id="UP000006548">
    <property type="component" value="Chromosome 4"/>
</dbReference>
<dbReference type="ExpressionAtlas" id="Q39048">
    <property type="expression patterns" value="baseline and differential"/>
</dbReference>
<dbReference type="GO" id="GO:0005783">
    <property type="term" value="C:endoplasmic reticulum"/>
    <property type="evidence" value="ECO:0000314"/>
    <property type="project" value="TAIR"/>
</dbReference>
<dbReference type="GO" id="GO:0005634">
    <property type="term" value="C:nucleus"/>
    <property type="evidence" value="ECO:0000314"/>
    <property type="project" value="TAIR"/>
</dbReference>
<dbReference type="GO" id="GO:0071555">
    <property type="term" value="P:cell wall organization"/>
    <property type="evidence" value="ECO:0007669"/>
    <property type="project" value="UniProtKB-KW"/>
</dbReference>
<dbReference type="GO" id="GO:0009555">
    <property type="term" value="P:pollen development"/>
    <property type="evidence" value="ECO:0000316"/>
    <property type="project" value="TAIR"/>
</dbReference>
<dbReference type="GO" id="GO:0042761">
    <property type="term" value="P:very long-chain fatty acid biosynthetic process"/>
    <property type="evidence" value="ECO:0000314"/>
    <property type="project" value="TAIR"/>
</dbReference>
<dbReference type="GO" id="GO:0010025">
    <property type="term" value="P:wax biosynthetic process"/>
    <property type="evidence" value="ECO:0000315"/>
    <property type="project" value="TAIR"/>
</dbReference>
<dbReference type="FunFam" id="3.30.559.10:FF:000137">
    <property type="entry name" value="Protein ECERIFERUM 2"/>
    <property type="match status" value="1"/>
</dbReference>
<dbReference type="Gene3D" id="3.30.559.10">
    <property type="entry name" value="Chloramphenicol acetyltransferase-like domain"/>
    <property type="match status" value="2"/>
</dbReference>
<dbReference type="InterPro" id="IPR023213">
    <property type="entry name" value="CAT-like_dom_sf"/>
</dbReference>
<dbReference type="InterPro" id="IPR050317">
    <property type="entry name" value="Plant_Fungal_Acyltransferase"/>
</dbReference>
<dbReference type="PANTHER" id="PTHR31642:SF259">
    <property type="entry name" value="PROTEIN ECERIFERUM 2"/>
    <property type="match status" value="1"/>
</dbReference>
<dbReference type="PANTHER" id="PTHR31642">
    <property type="entry name" value="TRICHOTHECENE 3-O-ACETYLTRANSFERASE"/>
    <property type="match status" value="1"/>
</dbReference>
<dbReference type="Pfam" id="PF02458">
    <property type="entry name" value="Transferase"/>
    <property type="match status" value="1"/>
</dbReference>